<sequence length="127" mass="14589">MQLVFSYIEHKSQVIPVCFWKENHQLHPLTGYLNDPMGGLNYFAFLDKVLSMLRDEDIQQGDISSNSWGVEIHGDQVYFCFLFAQEDTSLHFALSRAVLIDILVLWLAFRSQKPVAGYQEVLSFAEA</sequence>
<keyword id="KW-1185">Reference proteome</keyword>
<organism>
    <name type="scientific">Pasteurella multocida (strain Pm70)</name>
    <dbReference type="NCBI Taxonomy" id="272843"/>
    <lineage>
        <taxon>Bacteria</taxon>
        <taxon>Pseudomonadati</taxon>
        <taxon>Pseudomonadota</taxon>
        <taxon>Gammaproteobacteria</taxon>
        <taxon>Pasteurellales</taxon>
        <taxon>Pasteurellaceae</taxon>
        <taxon>Pasteurella</taxon>
    </lineage>
</organism>
<dbReference type="EMBL" id="AE004439">
    <property type="protein sequence ID" value="AAK02575.1"/>
    <property type="molecule type" value="Genomic_DNA"/>
</dbReference>
<dbReference type="STRING" id="272843.PM0491"/>
<dbReference type="EnsemblBacteria" id="AAK02575">
    <property type="protein sequence ID" value="AAK02575"/>
    <property type="gene ID" value="PM0491"/>
</dbReference>
<dbReference type="KEGG" id="pmu:PM0491"/>
<dbReference type="PATRIC" id="fig|272843.6.peg.502"/>
<dbReference type="HOGENOM" id="CLU_2001422_0_0_6"/>
<dbReference type="OrthoDB" id="5681244at2"/>
<dbReference type="Proteomes" id="UP000000809">
    <property type="component" value="Chromosome"/>
</dbReference>
<dbReference type="InterPro" id="IPR035416">
    <property type="entry name" value="DUF5376"/>
</dbReference>
<dbReference type="Pfam" id="PF17346">
    <property type="entry name" value="DUF5376"/>
    <property type="match status" value="1"/>
</dbReference>
<reference key="1">
    <citation type="journal article" date="2001" name="Proc. Natl. Acad. Sci. U.S.A.">
        <title>Complete genomic sequence of Pasteurella multocida Pm70.</title>
        <authorList>
            <person name="May B.J."/>
            <person name="Zhang Q."/>
            <person name="Li L.L."/>
            <person name="Paustian M.L."/>
            <person name="Whittam T.S."/>
            <person name="Kapur V."/>
        </authorList>
    </citation>
    <scope>NUCLEOTIDE SEQUENCE [LARGE SCALE GENOMIC DNA]</scope>
    <source>
        <strain>Pm70</strain>
    </source>
</reference>
<gene>
    <name type="ordered locus">PM0491</name>
</gene>
<protein>
    <recommendedName>
        <fullName>Uncharacterized protein PM0491</fullName>
    </recommendedName>
</protein>
<proteinExistence type="predicted"/>
<name>Y491_PASMU</name>
<accession>Q9CNE1</accession>
<feature type="chain" id="PRO_0000216293" description="Uncharacterized protein PM0491">
    <location>
        <begin position="1"/>
        <end position="127"/>
    </location>
</feature>